<organism>
    <name type="scientific">Anoplius samariensis</name>
    <name type="common">Solitary wasp</name>
    <dbReference type="NCBI Taxonomy" id="200614"/>
    <lineage>
        <taxon>Eukaryota</taxon>
        <taxon>Metazoa</taxon>
        <taxon>Ecdysozoa</taxon>
        <taxon>Arthropoda</taxon>
        <taxon>Hexapoda</taxon>
        <taxon>Insecta</taxon>
        <taxon>Pterygota</taxon>
        <taxon>Neoptera</taxon>
        <taxon>Endopterygota</taxon>
        <taxon>Hymenoptera</taxon>
        <taxon>Apocrita</taxon>
        <taxon>Aculeata</taxon>
        <taxon>Pompiloidea</taxon>
        <taxon>Pompilidae</taxon>
        <taxon>Pompilinae</taxon>
        <taxon>Anoplius</taxon>
    </lineage>
</organism>
<accession>P69391</accession>
<accession>A6P330</accession>
<feature type="signal peptide" evidence="1">
    <location>
        <begin position="1"/>
        <end position="22"/>
    </location>
</feature>
<feature type="propeptide" id="PRO_0000430343" evidence="6">
    <location>
        <begin position="23"/>
        <end position="42"/>
    </location>
</feature>
<feature type="peptide" id="PRO_0000044536" description="Alpha-pompilidotoxin" evidence="6">
    <location>
        <begin position="43"/>
        <end position="55"/>
    </location>
</feature>
<feature type="modified residue" description="Leucine amide" evidence="11">
    <location>
        <position position="55"/>
    </location>
</feature>
<feature type="mutagenesis site" description="5-fold increase in potency and similar order of inhibition potency on different Nav isoforms. No change in potency; when associated with R-342. 3-fold increase in potency; when associated with R-12. 3-fold increase in potency; when associated with R-342 and R-144." evidence="2 4">
    <original>R</original>
    <variation>K</variation>
    <location>
        <position position="43"/>
    </location>
</feature>
<feature type="mutagenesis site" description="Complete loss of potency." evidence="2">
    <original>I</original>
    <variation>F</variation>
    <location>
        <position position="44"/>
    </location>
</feature>
<feature type="mutagenesis site" description="Complete loss of potency." evidence="2">
    <original>I</original>
    <variation>T</variation>
    <location>
        <position position="44"/>
    </location>
</feature>
<feature type="mutagenesis site" description="Complete loss of potency; when associated with K-542." evidence="2">
    <original>K</original>
    <variation>G</variation>
    <location>
        <position position="45"/>
    </location>
</feature>
<feature type="mutagenesis site" description="Complete loss of potency; when associated with K-442." evidence="2">
    <original>K</original>
    <variation>I</variation>
    <location>
        <position position="45"/>
    </location>
</feature>
<feature type="mutagenesis site" description="Complete loss of potency." evidence="2">
    <original>K</original>
    <variation>L</variation>
    <location>
        <position position="45"/>
    </location>
</feature>
<feature type="mutagenesis site" description="5-fold increase in potency. No change in potency; when associated with K-142. 3-fold increase in potency; when associated with K-142 and R-12. 5-fold increase in potency; when associated with R-144." evidence="2">
    <original>K</original>
    <variation>R</variation>
    <location>
        <position position="45"/>
    </location>
</feature>
<feature type="mutagenesis site" description="Complete loss of potency; when associated with I-342." evidence="2">
    <original>I</original>
    <variation>K</variation>
    <location>
        <position position="46"/>
    </location>
</feature>
<feature type="mutagenesis site" description="Complete loss of potency." evidence="2">
    <original>I</original>
    <variation>T</variation>
    <location>
        <position position="46"/>
    </location>
</feature>
<feature type="mutagenesis site" description="Complete loss of potency; when associated with G-342." evidence="2">
    <original>G</original>
    <variation>K</variation>
    <location>
        <position position="47"/>
    </location>
</feature>
<feature type="mutagenesis site" description="Complete loss of potency." evidence="2">
    <original>G</original>
    <variation>L</variation>
    <location>
        <position position="47"/>
    </location>
</feature>
<feature type="mutagenesis site" description="Complete loss of potency." evidence="2">
    <original>G</original>
    <variation>P</variation>
    <location>
        <position position="47"/>
    </location>
</feature>
<feature type="mutagenesis site" description="Complete loss of potency." evidence="2">
    <original>L</original>
    <variation>S</variation>
    <location>
        <position position="48"/>
    </location>
</feature>
<feature type="mutagenesis site" description="Complete loss of potency." evidence="2">
    <original>F</original>
    <variation>Y</variation>
    <location>
        <position position="49"/>
    </location>
</feature>
<feature type="mutagenesis site" description="2-fold decrease in potency." evidence="2">
    <original>D</original>
    <variation>A</variation>
    <location>
        <position position="50"/>
    </location>
</feature>
<feature type="mutagenesis site" description="Complete loss of potency." evidence="2">
    <original>D</original>
    <variation>N</variation>
    <location>
        <position position="50"/>
    </location>
</feature>
<feature type="mutagenesis site" description="1.25-fold decrease in potency." evidence="2">
    <original>Q</original>
    <variation>L</variation>
    <location>
        <position position="51"/>
    </location>
</feature>
<feature type="mutagenesis site" description="2-fold decrease in potency." evidence="2">
    <original>Q</original>
    <variation>N</variation>
    <location>
        <position position="51"/>
    </location>
</feature>
<feature type="mutagenesis site" description="Complete loss of potency." evidence="2">
    <original>L</original>
    <variation>T</variation>
    <location>
        <position position="52"/>
    </location>
</feature>
<feature type="mutagenesis site" description="Complete loss of potency." evidence="2">
    <original>S</original>
    <variation>A</variation>
    <location>
        <position position="53"/>
    </location>
</feature>
<feature type="mutagenesis site" description="5-fold increase in potency (This mutant corresponds to beta-PMTX). 5-fold increase in potency; when associated with R-342. 3-fold increase in potency; when associated with K-1. 3-fold increase in potency; when associated with K-142 and R-342." evidence="2">
    <original>K</original>
    <variation>R</variation>
    <location>
        <position position="54"/>
    </location>
</feature>
<feature type="mutagenesis site" description="10-fold decrease in potency." evidence="2">
    <original>L</original>
    <variation>S</variation>
    <location>
        <position position="55"/>
    </location>
</feature>
<reference key="1">
    <citation type="submission" date="2002-07" db="EMBL/GenBank/DDBJ databases">
        <title>Cloning of alpha-pompilidotoxin and As126 cDNA in Anoplius samariensis.</title>
        <authorList>
            <person name="Hisada M."/>
            <person name="Kanda A."/>
            <person name="Kuroda K."/>
            <person name="Minakata H."/>
            <person name="Nakajima T."/>
        </authorList>
    </citation>
    <scope>NUCLEOTIDE SEQUENCE [MRNA]</scope>
</reference>
<reference key="2">
    <citation type="journal article" date="1998" name="Biochem. Biophys. Res. Commun.">
        <title>Isolation and structure of pompilidotoxins, novel peptide neurotoxins in solitary wasp venoms.</title>
        <authorList>
            <person name="Konno K."/>
            <person name="Hisada M."/>
            <person name="Itagaki Y."/>
            <person name="Naoki H."/>
            <person name="Kawai N."/>
            <person name="Miwa A."/>
            <person name="Yasuhara T."/>
            <person name="Takayama H."/>
        </authorList>
    </citation>
    <scope>PROTEIN SEQUENCE OF 43-55</scope>
    <scope>MASS SPECTROMETRY</scope>
    <scope>AMIDATION AT LEU-55</scope>
    <scope>SYNTHESIS OF 43-55</scope>
    <source>
        <tissue>Venom</tissue>
    </source>
</reference>
<reference key="3">
    <citation type="journal article" date="1997" name="Neurosci. Lett.">
        <title>Alpha-pompilidotoxin (alpha-PMTX), a novel neurotoxin from the venom of a solitary wasp, facilitates transmission in the crustacean neuromuscular synapse.</title>
        <authorList>
            <person name="Konno K."/>
            <person name="Miwa A."/>
            <person name="Takayama H."/>
            <person name="Hisada M."/>
            <person name="Itagaki Y."/>
            <person name="Naoki H."/>
            <person name="Yasuhara T."/>
            <person name="Kawai N."/>
        </authorList>
    </citation>
    <scope>CHARACTERIZATION</scope>
    <source>
        <tissue>Venom</tissue>
    </source>
</reference>
<reference key="4">
    <citation type="journal article" date="1998" name="Neurosci. Lett.">
        <title>Effects of alpha-pompilidotoxin on synchronized firing in networks of rat cortical neurons.</title>
        <authorList>
            <person name="Harsch A."/>
            <person name="Konno K."/>
            <person name="Takayama H."/>
            <person name="Kawai N."/>
            <person name="Robinson H."/>
        </authorList>
    </citation>
    <scope>FUNCTION</scope>
    <scope>SUBCELLULAR LOCATION</scope>
    <source>
        <tissue>Venom</tissue>
    </source>
</reference>
<reference key="5">
    <citation type="journal article" date="2000" name="Eur. J. Neurosci.">
        <title>A new class of neurotoxin from wasp venom slows inactivation of sodium current.</title>
        <authorList>
            <person name="Sahara Y."/>
            <person name="Gotoh M."/>
            <person name="Konno K."/>
            <person name="Miwa A."/>
            <person name="Tsubokawa H."/>
            <person name="Robinson H.P."/>
            <person name="Kawai N."/>
        </authorList>
    </citation>
    <scope>FUNCTION</scope>
    <source>
        <tissue>Venom</tissue>
    </source>
</reference>
<reference key="6">
    <citation type="journal article" date="2000" name="Neurosci. Lett.">
        <title>Molecular determinants of binding of a wasp toxin (PMTXs) and its analogs in the Na+ channels proteins.</title>
        <authorList>
            <person name="Konno K."/>
            <person name="Hisada M."/>
            <person name="Naoki H."/>
            <person name="Itagaki Y."/>
            <person name="Yasuhara T."/>
            <person name="Nakata Y."/>
            <person name="Miwa A."/>
            <person name="Kawai N."/>
        </authorList>
    </citation>
    <scope>MUTAGENESIS OF ARG-43; ILE-44; LYS-45; ILE-46; GLY-47; LEU-48; PHE-49; ASP-50; GLN-51; LEU-52; SER-53; LYS-54 AND LEU-55</scope>
    <scope>SYNTHESIS OF 43-55</scope>
</reference>
<reference key="7">
    <citation type="journal article" date="2010" name="FEBS J.">
        <title>Voltage-gated sodium channel isoform-specific effects of pompilidotoxins.</title>
        <authorList>
            <person name="Schiavon E."/>
            <person name="Stevens M."/>
            <person name="Zaharenko A.J."/>
            <person name="Konno K."/>
            <person name="Tytgat J."/>
            <person name="Wanke E."/>
        </authorList>
    </citation>
    <scope>FUNCTION</scope>
    <scope>SYNTHESIS OF 43-55</scope>
    <scope>MUTAGENESIS OF ARG-43</scope>
</reference>
<reference key="8">
    <citation type="journal article" date="2016" name="Toxins">
        <title>Peptide toxins in solitary wasp venoms.</title>
        <authorList>
            <person name="Konno K."/>
            <person name="Kazuma K."/>
            <person name="Nihei K."/>
        </authorList>
    </citation>
    <scope>REVIEW</scope>
</reference>
<sequence>MFKQLILLALAAVFLLINISSAEPAAEPNANAEPLAEASAEPRIKIGLFDQLSKLG</sequence>
<keyword id="KW-0027">Amidation</keyword>
<keyword id="KW-0903">Direct protein sequencing</keyword>
<keyword id="KW-0872">Ion channel impairing toxin</keyword>
<keyword id="KW-0528">Neurotoxin</keyword>
<keyword id="KW-0638">Presynaptic neurotoxin</keyword>
<keyword id="KW-0964">Secreted</keyword>
<keyword id="KW-0732">Signal</keyword>
<keyword id="KW-0800">Toxin</keyword>
<keyword id="KW-0738">Voltage-gated sodium channel impairing toxin</keyword>
<dbReference type="EMBL" id="AB087726">
    <property type="protein sequence ID" value="BAF65254.1"/>
    <property type="molecule type" value="mRNA"/>
</dbReference>
<dbReference type="GO" id="GO:0005576">
    <property type="term" value="C:extracellular region"/>
    <property type="evidence" value="ECO:0007669"/>
    <property type="project" value="UniProtKB-SubCell"/>
</dbReference>
<dbReference type="GO" id="GO:0044231">
    <property type="term" value="C:host cell presynaptic membrane"/>
    <property type="evidence" value="ECO:0007669"/>
    <property type="project" value="UniProtKB-KW"/>
</dbReference>
<dbReference type="GO" id="GO:0017080">
    <property type="term" value="F:sodium channel regulator activity"/>
    <property type="evidence" value="ECO:0007669"/>
    <property type="project" value="UniProtKB-KW"/>
</dbReference>
<dbReference type="GO" id="GO:0090729">
    <property type="term" value="F:toxin activity"/>
    <property type="evidence" value="ECO:0007669"/>
    <property type="project" value="UniProtKB-KW"/>
</dbReference>
<proteinExistence type="evidence at protein level"/>
<protein>
    <recommendedName>
        <fullName evidence="7 8">Alpha-pompilidotoxin</fullName>
        <shortName evidence="7 8">Alpha-PMTX</shortName>
    </recommendedName>
</protein>
<comment type="function">
    <text evidence="3 4 5">Inhibits sodium channels (Nav) inactivation. Shows two types of inhibitory activities on channels. Inhibition of hNav1.6/SCN8A shows a large increase in the steady-state current component without any increase in the slow component, whereas inhibition of hNav1.1/SCN1A, hNav1.2/SCN2A, hNav1.3/SCN3A and hNav1.7/SCN9A shows a large increase in the slow component with only a small steady-state component (PubMed:20059541). Is 5-fold less potent than beta-PMTX for inducing repetitive action potentials in lobster neuromuscular junctions.</text>
</comment>
<comment type="subcellular location">
    <subcellularLocation>
        <location evidence="5">Secreted</location>
    </subcellularLocation>
</comment>
<comment type="tissue specificity">
    <text evidence="9">Expressed by the venom gland.</text>
</comment>
<comment type="mass spectrometry"/>
<comment type="miscellaneous">
    <text evidence="4">Negative results: does not or very slightly inactivate hNav1.4/SCN4A and hNav1.5/SCN5A sodium channels.</text>
</comment>
<comment type="miscellaneous">
    <text evidence="10">Potency in mutagenesis experiments is measured by the concentration of these mutant toxins for inducing repetitive action potentials.</text>
</comment>
<name>PMTXA_ANOSM</name>
<evidence type="ECO:0000255" key="1"/>
<evidence type="ECO:0000269" key="2">
    <source>
    </source>
</evidence>
<evidence type="ECO:0000269" key="3">
    <source>
    </source>
</evidence>
<evidence type="ECO:0000269" key="4">
    <source>
    </source>
</evidence>
<evidence type="ECO:0000269" key="5">
    <source>
    </source>
</evidence>
<evidence type="ECO:0000269" key="6">
    <source>
    </source>
</evidence>
<evidence type="ECO:0000303" key="7">
    <source>
    </source>
</evidence>
<evidence type="ECO:0000303" key="8">
    <source>
    </source>
</evidence>
<evidence type="ECO:0000305" key="9"/>
<evidence type="ECO:0000305" key="10">
    <source>
    </source>
</evidence>
<evidence type="ECO:0000305" key="11">
    <source>
    </source>
</evidence>